<evidence type="ECO:0000255" key="1">
    <source>
        <dbReference type="HAMAP-Rule" id="MF_00508"/>
    </source>
</evidence>
<evidence type="ECO:0000305" key="2"/>
<proteinExistence type="inferred from homology"/>
<reference key="1">
    <citation type="journal article" date="2005" name="J. Bacteriol.">
        <title>Genomic sequence of an otitis media isolate of nontypeable Haemophilus influenzae: comparative study with H. influenzae serotype d, strain KW20.</title>
        <authorList>
            <person name="Harrison A."/>
            <person name="Dyer D.W."/>
            <person name="Gillaspy A."/>
            <person name="Ray W.C."/>
            <person name="Mungur R."/>
            <person name="Carson M.B."/>
            <person name="Zhong H."/>
            <person name="Gipson J."/>
            <person name="Gipson M."/>
            <person name="Johnson L.S."/>
            <person name="Lewis L."/>
            <person name="Bakaletz L.O."/>
            <person name="Munson R.S. Jr."/>
        </authorList>
    </citation>
    <scope>NUCLEOTIDE SEQUENCE [LARGE SCALE GENOMIC DNA]</scope>
    <source>
        <strain>86-028NP</strain>
    </source>
</reference>
<accession>Q4QMC3</accession>
<dbReference type="EMBL" id="CP000057">
    <property type="protein sequence ID" value="AAX87824.1"/>
    <property type="molecule type" value="Genomic_DNA"/>
</dbReference>
<dbReference type="RefSeq" id="WP_001181005.1">
    <property type="nucleotide sequence ID" value="NC_007146.2"/>
</dbReference>
<dbReference type="SMR" id="Q4QMC3"/>
<dbReference type="GeneID" id="98390443"/>
<dbReference type="KEGG" id="hit:NTHI0937"/>
<dbReference type="HOGENOM" id="CLU_122625_1_3_6"/>
<dbReference type="Proteomes" id="UP000002525">
    <property type="component" value="Chromosome"/>
</dbReference>
<dbReference type="GO" id="GO:1990904">
    <property type="term" value="C:ribonucleoprotein complex"/>
    <property type="evidence" value="ECO:0007669"/>
    <property type="project" value="UniProtKB-KW"/>
</dbReference>
<dbReference type="GO" id="GO:0005840">
    <property type="term" value="C:ribosome"/>
    <property type="evidence" value="ECO:0007669"/>
    <property type="project" value="UniProtKB-KW"/>
</dbReference>
<dbReference type="GO" id="GO:0003735">
    <property type="term" value="F:structural constituent of ribosome"/>
    <property type="evidence" value="ECO:0007669"/>
    <property type="project" value="InterPro"/>
</dbReference>
<dbReference type="GO" id="GO:0000049">
    <property type="term" value="F:tRNA binding"/>
    <property type="evidence" value="ECO:0007669"/>
    <property type="project" value="UniProtKB-UniRule"/>
</dbReference>
<dbReference type="GO" id="GO:0006412">
    <property type="term" value="P:translation"/>
    <property type="evidence" value="ECO:0007669"/>
    <property type="project" value="UniProtKB-UniRule"/>
</dbReference>
<dbReference type="FunFam" id="3.30.70.600:FF:000001">
    <property type="entry name" value="30S ribosomal protein S10"/>
    <property type="match status" value="1"/>
</dbReference>
<dbReference type="Gene3D" id="3.30.70.600">
    <property type="entry name" value="Ribosomal protein S10 domain"/>
    <property type="match status" value="1"/>
</dbReference>
<dbReference type="HAMAP" id="MF_00508">
    <property type="entry name" value="Ribosomal_uS10"/>
    <property type="match status" value="1"/>
</dbReference>
<dbReference type="InterPro" id="IPR001848">
    <property type="entry name" value="Ribosomal_uS10"/>
</dbReference>
<dbReference type="InterPro" id="IPR018268">
    <property type="entry name" value="Ribosomal_uS10_CS"/>
</dbReference>
<dbReference type="InterPro" id="IPR027486">
    <property type="entry name" value="Ribosomal_uS10_dom"/>
</dbReference>
<dbReference type="InterPro" id="IPR036838">
    <property type="entry name" value="Ribosomal_uS10_dom_sf"/>
</dbReference>
<dbReference type="NCBIfam" id="NF001861">
    <property type="entry name" value="PRK00596.1"/>
    <property type="match status" value="1"/>
</dbReference>
<dbReference type="NCBIfam" id="TIGR01049">
    <property type="entry name" value="rpsJ_bact"/>
    <property type="match status" value="1"/>
</dbReference>
<dbReference type="PANTHER" id="PTHR11700">
    <property type="entry name" value="30S RIBOSOMAL PROTEIN S10 FAMILY MEMBER"/>
    <property type="match status" value="1"/>
</dbReference>
<dbReference type="Pfam" id="PF00338">
    <property type="entry name" value="Ribosomal_S10"/>
    <property type="match status" value="1"/>
</dbReference>
<dbReference type="PRINTS" id="PR00971">
    <property type="entry name" value="RIBOSOMALS10"/>
</dbReference>
<dbReference type="SMART" id="SM01403">
    <property type="entry name" value="Ribosomal_S10"/>
    <property type="match status" value="1"/>
</dbReference>
<dbReference type="SUPFAM" id="SSF54999">
    <property type="entry name" value="Ribosomal protein S10"/>
    <property type="match status" value="1"/>
</dbReference>
<dbReference type="PROSITE" id="PS00361">
    <property type="entry name" value="RIBOSOMAL_S10"/>
    <property type="match status" value="1"/>
</dbReference>
<keyword id="KW-0687">Ribonucleoprotein</keyword>
<keyword id="KW-0689">Ribosomal protein</keyword>
<organism>
    <name type="scientific">Haemophilus influenzae (strain 86-028NP)</name>
    <dbReference type="NCBI Taxonomy" id="281310"/>
    <lineage>
        <taxon>Bacteria</taxon>
        <taxon>Pseudomonadati</taxon>
        <taxon>Pseudomonadota</taxon>
        <taxon>Gammaproteobacteria</taxon>
        <taxon>Pasteurellales</taxon>
        <taxon>Pasteurellaceae</taxon>
        <taxon>Haemophilus</taxon>
    </lineage>
</organism>
<gene>
    <name evidence="1" type="primary">rpsJ</name>
    <name type="ordered locus">NTHI0937</name>
</gene>
<name>RS10_HAEI8</name>
<feature type="chain" id="PRO_0000237050" description="Small ribosomal subunit protein uS10">
    <location>
        <begin position="1"/>
        <end position="103"/>
    </location>
</feature>
<comment type="function">
    <text evidence="1">Involved in the binding of tRNA to the ribosomes.</text>
</comment>
<comment type="subunit">
    <text evidence="1">Part of the 30S ribosomal subunit.</text>
</comment>
<comment type="similarity">
    <text evidence="1">Belongs to the universal ribosomal protein uS10 family.</text>
</comment>
<protein>
    <recommendedName>
        <fullName evidence="1">Small ribosomal subunit protein uS10</fullName>
    </recommendedName>
    <alternativeName>
        <fullName evidence="2">30S ribosomal protein S10</fullName>
    </alternativeName>
</protein>
<sequence length="103" mass="11767">MQNQRIRIRLKAFDHRLIDQSTAEIVETAKRTGAQVRGPIPLPTRKERFTVLISPHVNKDARDQYEIRTHKRLVDIVEPTEKTVDALMRLDLAAGVDVQISLG</sequence>